<protein>
    <recommendedName>
        <fullName>Basic phospholipase A2 PLA-B</fullName>
        <shortName>svPLA2</shortName>
        <ecNumber>3.1.1.4</ecNumber>
    </recommendedName>
    <alternativeName>
        <fullName>Phosphatidylcholine 2-acylhydrolase</fullName>
    </alternativeName>
</protein>
<proteinExistence type="evidence at protein level"/>
<sequence length="122" mass="14053">HLLQFRKMIKKMTGKEPIVSYAFYGCYCGKGGRGKPKDATDRCCFVHDCCYEKVTGCDPKWSYYTYSLENGDIVCEGDPYCTKVKCECDKKAAICFRDNLKTYKNRYMTFPDIFCTDPTEGC</sequence>
<accession>P59265</accession>
<reference key="1">
    <citation type="journal article" date="2001" name="Toxicon">
        <title>Characterization, amino acid sequence and evolution of edema-inducing, basic phospholipase A2 from Trimeresurus flavoviridis venom.</title>
        <authorList>
            <person name="Yamaguchi Y."/>
            <person name="Shimohigashi Y."/>
            <person name="Chijiwa T."/>
            <person name="Nakai M."/>
            <person name="Ogawa T."/>
            <person name="Hattori S."/>
            <person name="Ohno M."/>
        </authorList>
    </citation>
    <scope>PROTEIN SEQUENCE</scope>
    <source>
        <strain>Tokunoshima</strain>
        <tissue>Venom</tissue>
    </source>
</reference>
<dbReference type="EC" id="3.1.1.4"/>
<dbReference type="SMR" id="P59265"/>
<dbReference type="GO" id="GO:0005576">
    <property type="term" value="C:extracellular region"/>
    <property type="evidence" value="ECO:0007669"/>
    <property type="project" value="UniProtKB-SubCell"/>
</dbReference>
<dbReference type="GO" id="GO:0005509">
    <property type="term" value="F:calcium ion binding"/>
    <property type="evidence" value="ECO:0007669"/>
    <property type="project" value="InterPro"/>
</dbReference>
<dbReference type="GO" id="GO:0047498">
    <property type="term" value="F:calcium-dependent phospholipase A2 activity"/>
    <property type="evidence" value="ECO:0007669"/>
    <property type="project" value="TreeGrafter"/>
</dbReference>
<dbReference type="GO" id="GO:0005543">
    <property type="term" value="F:phospholipid binding"/>
    <property type="evidence" value="ECO:0007669"/>
    <property type="project" value="TreeGrafter"/>
</dbReference>
<dbReference type="GO" id="GO:0090729">
    <property type="term" value="F:toxin activity"/>
    <property type="evidence" value="ECO:0007669"/>
    <property type="project" value="UniProtKB-KW"/>
</dbReference>
<dbReference type="GO" id="GO:0050482">
    <property type="term" value="P:arachidonate secretion"/>
    <property type="evidence" value="ECO:0007669"/>
    <property type="project" value="InterPro"/>
</dbReference>
<dbReference type="GO" id="GO:0016042">
    <property type="term" value="P:lipid catabolic process"/>
    <property type="evidence" value="ECO:0007669"/>
    <property type="project" value="UniProtKB-KW"/>
</dbReference>
<dbReference type="GO" id="GO:0042130">
    <property type="term" value="P:negative regulation of T cell proliferation"/>
    <property type="evidence" value="ECO:0007669"/>
    <property type="project" value="TreeGrafter"/>
</dbReference>
<dbReference type="GO" id="GO:0006644">
    <property type="term" value="P:phospholipid metabolic process"/>
    <property type="evidence" value="ECO:0007669"/>
    <property type="project" value="InterPro"/>
</dbReference>
<dbReference type="CDD" id="cd00125">
    <property type="entry name" value="PLA2c"/>
    <property type="match status" value="1"/>
</dbReference>
<dbReference type="FunFam" id="1.20.90.10:FF:000001">
    <property type="entry name" value="Basic phospholipase A2 homolog"/>
    <property type="match status" value="1"/>
</dbReference>
<dbReference type="Gene3D" id="1.20.90.10">
    <property type="entry name" value="Phospholipase A2 domain"/>
    <property type="match status" value="1"/>
</dbReference>
<dbReference type="InterPro" id="IPR001211">
    <property type="entry name" value="PLipase_A2"/>
</dbReference>
<dbReference type="InterPro" id="IPR016090">
    <property type="entry name" value="PLipase_A2_dom"/>
</dbReference>
<dbReference type="InterPro" id="IPR036444">
    <property type="entry name" value="PLipase_A2_dom_sf"/>
</dbReference>
<dbReference type="InterPro" id="IPR033113">
    <property type="entry name" value="PLipase_A2_His_AS"/>
</dbReference>
<dbReference type="PANTHER" id="PTHR11716">
    <property type="entry name" value="PHOSPHOLIPASE A2 FAMILY MEMBER"/>
    <property type="match status" value="1"/>
</dbReference>
<dbReference type="PANTHER" id="PTHR11716:SF9">
    <property type="entry name" value="PHOSPHOLIPASE A2, MEMBRANE ASSOCIATED"/>
    <property type="match status" value="1"/>
</dbReference>
<dbReference type="Pfam" id="PF00068">
    <property type="entry name" value="Phospholip_A2_1"/>
    <property type="match status" value="1"/>
</dbReference>
<dbReference type="PRINTS" id="PR00389">
    <property type="entry name" value="PHPHLIPASEA2"/>
</dbReference>
<dbReference type="SMART" id="SM00085">
    <property type="entry name" value="PA2c"/>
    <property type="match status" value="1"/>
</dbReference>
<dbReference type="SUPFAM" id="SSF48619">
    <property type="entry name" value="Phospholipase A2, PLA2"/>
    <property type="match status" value="1"/>
</dbReference>
<dbReference type="PROSITE" id="PS00118">
    <property type="entry name" value="PA2_HIS"/>
    <property type="match status" value="1"/>
</dbReference>
<evidence type="ECO:0000250" key="1"/>
<evidence type="ECO:0000250" key="2">
    <source>
        <dbReference type="UniProtKB" id="O42187"/>
    </source>
</evidence>
<evidence type="ECO:0000255" key="3">
    <source>
        <dbReference type="PROSITE-ProRule" id="PRU10035"/>
    </source>
</evidence>
<evidence type="ECO:0000305" key="4"/>
<comment type="function">
    <text>Snake venom phospholipase A2 (PLA2) that displays edema-inducing activities. PLA-B is three times more active than PLA-A in edema-inducing activities. PLA2 catalyzes the calcium-dependent hydrolysis of the 2-acyl groups in 3-sn-phosphoglycerides.</text>
</comment>
<comment type="catalytic activity">
    <reaction evidence="3">
        <text>a 1,2-diacyl-sn-glycero-3-phosphocholine + H2O = a 1-acyl-sn-glycero-3-phosphocholine + a fatty acid + H(+)</text>
        <dbReference type="Rhea" id="RHEA:15801"/>
        <dbReference type="ChEBI" id="CHEBI:15377"/>
        <dbReference type="ChEBI" id="CHEBI:15378"/>
        <dbReference type="ChEBI" id="CHEBI:28868"/>
        <dbReference type="ChEBI" id="CHEBI:57643"/>
        <dbReference type="ChEBI" id="CHEBI:58168"/>
        <dbReference type="EC" id="3.1.1.4"/>
    </reaction>
</comment>
<comment type="cofactor">
    <cofactor evidence="1">
        <name>Ca(2+)</name>
        <dbReference type="ChEBI" id="CHEBI:29108"/>
    </cofactor>
    <text evidence="1">Binds 1 Ca(2+) ion.</text>
</comment>
<comment type="subcellular location">
    <subcellularLocation>
        <location>Secreted</location>
    </subcellularLocation>
</comment>
<comment type="tissue specificity">
    <text>Expressed by the venom gland.</text>
</comment>
<comment type="similarity">
    <text evidence="4">Belongs to the phospholipase A2 family. Group II subfamily. D49 sub-subfamily.</text>
</comment>
<name>PA2BB_PROFL</name>
<keyword id="KW-0106">Calcium</keyword>
<keyword id="KW-0903">Direct protein sequencing</keyword>
<keyword id="KW-1015">Disulfide bond</keyword>
<keyword id="KW-0378">Hydrolase</keyword>
<keyword id="KW-0442">Lipid degradation</keyword>
<keyword id="KW-0443">Lipid metabolism</keyword>
<keyword id="KW-0479">Metal-binding</keyword>
<keyword id="KW-0964">Secreted</keyword>
<keyword id="KW-0800">Toxin</keyword>
<organism>
    <name type="scientific">Protobothrops flavoviridis</name>
    <name type="common">Habu</name>
    <name type="synonym">Trimeresurus flavoviridis</name>
    <dbReference type="NCBI Taxonomy" id="88087"/>
    <lineage>
        <taxon>Eukaryota</taxon>
        <taxon>Metazoa</taxon>
        <taxon>Chordata</taxon>
        <taxon>Craniata</taxon>
        <taxon>Vertebrata</taxon>
        <taxon>Euteleostomi</taxon>
        <taxon>Lepidosauria</taxon>
        <taxon>Squamata</taxon>
        <taxon>Bifurcata</taxon>
        <taxon>Unidentata</taxon>
        <taxon>Episquamata</taxon>
        <taxon>Toxicofera</taxon>
        <taxon>Serpentes</taxon>
        <taxon>Colubroidea</taxon>
        <taxon>Viperidae</taxon>
        <taxon>Crotalinae</taxon>
        <taxon>Protobothrops</taxon>
    </lineage>
</organism>
<feature type="chain" id="PRO_0000161700" description="Basic phospholipase A2 PLA-B">
    <location>
        <begin position="1"/>
        <end position="122"/>
    </location>
</feature>
<feature type="active site" evidence="3">
    <location>
        <position position="47"/>
    </location>
</feature>
<feature type="active site" evidence="3">
    <location>
        <position position="89"/>
    </location>
</feature>
<feature type="binding site" evidence="2">
    <location>
        <position position="27"/>
    </location>
    <ligand>
        <name>Ca(2+)</name>
        <dbReference type="ChEBI" id="CHEBI:29108"/>
    </ligand>
</feature>
<feature type="binding site" evidence="2">
    <location>
        <position position="29"/>
    </location>
    <ligand>
        <name>Ca(2+)</name>
        <dbReference type="ChEBI" id="CHEBI:29108"/>
    </ligand>
</feature>
<feature type="binding site" evidence="2">
    <location>
        <position position="31"/>
    </location>
    <ligand>
        <name>Ca(2+)</name>
        <dbReference type="ChEBI" id="CHEBI:29108"/>
    </ligand>
</feature>
<feature type="binding site" evidence="2">
    <location>
        <position position="48"/>
    </location>
    <ligand>
        <name>Ca(2+)</name>
        <dbReference type="ChEBI" id="CHEBI:29108"/>
    </ligand>
</feature>
<feature type="disulfide bond" evidence="2">
    <location>
        <begin position="26"/>
        <end position="115"/>
    </location>
</feature>
<feature type="disulfide bond" evidence="2">
    <location>
        <begin position="28"/>
        <end position="44"/>
    </location>
</feature>
<feature type="disulfide bond" evidence="2">
    <location>
        <begin position="43"/>
        <end position="95"/>
    </location>
</feature>
<feature type="disulfide bond" evidence="2">
    <location>
        <begin position="49"/>
        <end position="122"/>
    </location>
</feature>
<feature type="disulfide bond" evidence="2">
    <location>
        <begin position="50"/>
        <end position="88"/>
    </location>
</feature>
<feature type="disulfide bond" evidence="2">
    <location>
        <begin position="57"/>
        <end position="81"/>
    </location>
</feature>
<feature type="disulfide bond" evidence="2">
    <location>
        <begin position="75"/>
        <end position="86"/>
    </location>
</feature>